<protein>
    <recommendedName>
        <fullName evidence="1">UDP-N-acetylmuramate--L-alanine ligase</fullName>
        <ecNumber evidence="1">6.3.2.8</ecNumber>
    </recommendedName>
    <alternativeName>
        <fullName evidence="1">UDP-N-acetylmuramoyl-L-alanine synthetase</fullName>
    </alternativeName>
</protein>
<organism>
    <name type="scientific">Brucella ovis (strain ATCC 25840 / 63/290 / NCTC 10512)</name>
    <dbReference type="NCBI Taxonomy" id="444178"/>
    <lineage>
        <taxon>Bacteria</taxon>
        <taxon>Pseudomonadati</taxon>
        <taxon>Pseudomonadota</taxon>
        <taxon>Alphaproteobacteria</taxon>
        <taxon>Hyphomicrobiales</taxon>
        <taxon>Brucellaceae</taxon>
        <taxon>Brucella/Ochrobactrum group</taxon>
        <taxon>Brucella</taxon>
    </lineage>
</organism>
<comment type="function">
    <text evidence="1">Cell wall formation.</text>
</comment>
<comment type="catalytic activity">
    <reaction evidence="1">
        <text>UDP-N-acetyl-alpha-D-muramate + L-alanine + ATP = UDP-N-acetyl-alpha-D-muramoyl-L-alanine + ADP + phosphate + H(+)</text>
        <dbReference type="Rhea" id="RHEA:23372"/>
        <dbReference type="ChEBI" id="CHEBI:15378"/>
        <dbReference type="ChEBI" id="CHEBI:30616"/>
        <dbReference type="ChEBI" id="CHEBI:43474"/>
        <dbReference type="ChEBI" id="CHEBI:57972"/>
        <dbReference type="ChEBI" id="CHEBI:70757"/>
        <dbReference type="ChEBI" id="CHEBI:83898"/>
        <dbReference type="ChEBI" id="CHEBI:456216"/>
        <dbReference type="EC" id="6.3.2.8"/>
    </reaction>
</comment>
<comment type="pathway">
    <text evidence="1">Cell wall biogenesis; peptidoglycan biosynthesis.</text>
</comment>
<comment type="subcellular location">
    <subcellularLocation>
        <location evidence="1">Cytoplasm</location>
    </subcellularLocation>
</comment>
<comment type="similarity">
    <text evidence="1">Belongs to the MurCDEF family.</text>
</comment>
<dbReference type="EC" id="6.3.2.8" evidence="1"/>
<dbReference type="EMBL" id="CP000708">
    <property type="protein sequence ID" value="ABQ61623.1"/>
    <property type="molecule type" value="Genomic_DNA"/>
</dbReference>
<dbReference type="RefSeq" id="WP_002964538.1">
    <property type="nucleotide sequence ID" value="NC_009505.1"/>
</dbReference>
<dbReference type="SMR" id="A5VRH6"/>
<dbReference type="GeneID" id="97533364"/>
<dbReference type="KEGG" id="bov:BOV_1387"/>
<dbReference type="HOGENOM" id="CLU_028104_2_2_5"/>
<dbReference type="PhylomeDB" id="A5VRH6"/>
<dbReference type="UniPathway" id="UPA00219"/>
<dbReference type="Proteomes" id="UP000006383">
    <property type="component" value="Chromosome I"/>
</dbReference>
<dbReference type="GO" id="GO:0005737">
    <property type="term" value="C:cytoplasm"/>
    <property type="evidence" value="ECO:0007669"/>
    <property type="project" value="UniProtKB-SubCell"/>
</dbReference>
<dbReference type="GO" id="GO:0005524">
    <property type="term" value="F:ATP binding"/>
    <property type="evidence" value="ECO:0007669"/>
    <property type="project" value="UniProtKB-UniRule"/>
</dbReference>
<dbReference type="GO" id="GO:0008763">
    <property type="term" value="F:UDP-N-acetylmuramate-L-alanine ligase activity"/>
    <property type="evidence" value="ECO:0007669"/>
    <property type="project" value="UniProtKB-UniRule"/>
</dbReference>
<dbReference type="GO" id="GO:0051301">
    <property type="term" value="P:cell division"/>
    <property type="evidence" value="ECO:0007669"/>
    <property type="project" value="UniProtKB-KW"/>
</dbReference>
<dbReference type="GO" id="GO:0071555">
    <property type="term" value="P:cell wall organization"/>
    <property type="evidence" value="ECO:0007669"/>
    <property type="project" value="UniProtKB-KW"/>
</dbReference>
<dbReference type="GO" id="GO:0009252">
    <property type="term" value="P:peptidoglycan biosynthetic process"/>
    <property type="evidence" value="ECO:0007669"/>
    <property type="project" value="UniProtKB-UniRule"/>
</dbReference>
<dbReference type="GO" id="GO:0008360">
    <property type="term" value="P:regulation of cell shape"/>
    <property type="evidence" value="ECO:0007669"/>
    <property type="project" value="UniProtKB-KW"/>
</dbReference>
<dbReference type="Gene3D" id="3.90.190.20">
    <property type="entry name" value="Mur ligase, C-terminal domain"/>
    <property type="match status" value="1"/>
</dbReference>
<dbReference type="Gene3D" id="3.40.1190.10">
    <property type="entry name" value="Mur-like, catalytic domain"/>
    <property type="match status" value="1"/>
</dbReference>
<dbReference type="Gene3D" id="3.40.50.720">
    <property type="entry name" value="NAD(P)-binding Rossmann-like Domain"/>
    <property type="match status" value="1"/>
</dbReference>
<dbReference type="HAMAP" id="MF_00046">
    <property type="entry name" value="MurC"/>
    <property type="match status" value="1"/>
</dbReference>
<dbReference type="InterPro" id="IPR036565">
    <property type="entry name" value="Mur-like_cat_sf"/>
</dbReference>
<dbReference type="InterPro" id="IPR004101">
    <property type="entry name" value="Mur_ligase_C"/>
</dbReference>
<dbReference type="InterPro" id="IPR036615">
    <property type="entry name" value="Mur_ligase_C_dom_sf"/>
</dbReference>
<dbReference type="InterPro" id="IPR013221">
    <property type="entry name" value="Mur_ligase_cen"/>
</dbReference>
<dbReference type="InterPro" id="IPR000713">
    <property type="entry name" value="Mur_ligase_N"/>
</dbReference>
<dbReference type="InterPro" id="IPR050061">
    <property type="entry name" value="MurCDEF_pg_biosynth"/>
</dbReference>
<dbReference type="InterPro" id="IPR005758">
    <property type="entry name" value="UDP-N-AcMur_Ala_ligase_MurC"/>
</dbReference>
<dbReference type="NCBIfam" id="TIGR01082">
    <property type="entry name" value="murC"/>
    <property type="match status" value="1"/>
</dbReference>
<dbReference type="PANTHER" id="PTHR43445:SF3">
    <property type="entry name" value="UDP-N-ACETYLMURAMATE--L-ALANINE LIGASE"/>
    <property type="match status" value="1"/>
</dbReference>
<dbReference type="PANTHER" id="PTHR43445">
    <property type="entry name" value="UDP-N-ACETYLMURAMATE--L-ALANINE LIGASE-RELATED"/>
    <property type="match status" value="1"/>
</dbReference>
<dbReference type="Pfam" id="PF01225">
    <property type="entry name" value="Mur_ligase"/>
    <property type="match status" value="1"/>
</dbReference>
<dbReference type="Pfam" id="PF02875">
    <property type="entry name" value="Mur_ligase_C"/>
    <property type="match status" value="1"/>
</dbReference>
<dbReference type="Pfam" id="PF08245">
    <property type="entry name" value="Mur_ligase_M"/>
    <property type="match status" value="1"/>
</dbReference>
<dbReference type="SUPFAM" id="SSF51984">
    <property type="entry name" value="MurCD N-terminal domain"/>
    <property type="match status" value="1"/>
</dbReference>
<dbReference type="SUPFAM" id="SSF53623">
    <property type="entry name" value="MurD-like peptide ligases, catalytic domain"/>
    <property type="match status" value="1"/>
</dbReference>
<dbReference type="SUPFAM" id="SSF53244">
    <property type="entry name" value="MurD-like peptide ligases, peptide-binding domain"/>
    <property type="match status" value="1"/>
</dbReference>
<keyword id="KW-0067">ATP-binding</keyword>
<keyword id="KW-0131">Cell cycle</keyword>
<keyword id="KW-0132">Cell division</keyword>
<keyword id="KW-0133">Cell shape</keyword>
<keyword id="KW-0961">Cell wall biogenesis/degradation</keyword>
<keyword id="KW-0963">Cytoplasm</keyword>
<keyword id="KW-0436">Ligase</keyword>
<keyword id="KW-0547">Nucleotide-binding</keyword>
<keyword id="KW-0573">Peptidoglycan synthesis</keyword>
<sequence>MKMPLNIGLVHFIGIGGIGMSGIAEVLHNLGYKVQGSDQSDSANVQRLREKGIEVFVGHKAENLGDAEVIVVSTAIKKNNPELVAAREKLLPVVRRAEMLAELMRFRRAVAIGGTHGKTTTTSLVAALLDAGHLDPTVINGGIINAYGTNARMGDGDWMVVEADESDGTFLKLPADIAVVTNIDPEHLDHYGNFDAVRAAFRQFVENVPFYGFGVMCLDHPEVQALVSRIEDRRIITYGSNPQAEVRFVNQRMDGAASLFDVVIRSRKGEATEIKDLRLPMPGLHNVSNATAAIAVAHELGISSDDIRRGLGSFGGVKRRFTHTGSWNGVEIFDDYGHHPVEIRAVLKAAREATSQAGGRVVAIVQPHRYTRLASLFDEFAACFNDADTVIVAPVYTAGEEPIEGVNSEELVSRIKTAGHRDARYATGPEALAPLVASIAQAGDFVVCLGAGNVTQWAYALPKELAEQGKK</sequence>
<proteinExistence type="inferred from homology"/>
<reference key="1">
    <citation type="journal article" date="2009" name="PLoS ONE">
        <title>Genome degradation in Brucella ovis corresponds with narrowing of its host range and tissue tropism.</title>
        <authorList>
            <person name="Tsolis R.M."/>
            <person name="Seshadri R."/>
            <person name="Santos R.L."/>
            <person name="Sangari F.J."/>
            <person name="Lobo J.M."/>
            <person name="de Jong M.F."/>
            <person name="Ren Q."/>
            <person name="Myers G."/>
            <person name="Brinkac L.M."/>
            <person name="Nelson W.C."/>
            <person name="Deboy R.T."/>
            <person name="Angiuoli S."/>
            <person name="Khouri H."/>
            <person name="Dimitrov G."/>
            <person name="Robinson J.R."/>
            <person name="Mulligan S."/>
            <person name="Walker R.L."/>
            <person name="Elzer P.E."/>
            <person name="Hassan K.A."/>
            <person name="Paulsen I.T."/>
        </authorList>
    </citation>
    <scope>NUCLEOTIDE SEQUENCE [LARGE SCALE GENOMIC DNA]</scope>
    <source>
        <strain>ATCC 25840 / 63/290 / NCTC 10512</strain>
    </source>
</reference>
<evidence type="ECO:0000255" key="1">
    <source>
        <dbReference type="HAMAP-Rule" id="MF_00046"/>
    </source>
</evidence>
<name>MURC_BRUO2</name>
<gene>
    <name evidence="1" type="primary">murC</name>
    <name type="ordered locus">BOV_1387</name>
</gene>
<feature type="chain" id="PRO_1000004316" description="UDP-N-acetylmuramate--L-alanine ligase">
    <location>
        <begin position="1"/>
        <end position="471"/>
    </location>
</feature>
<feature type="binding site" evidence="1">
    <location>
        <begin position="114"/>
        <end position="120"/>
    </location>
    <ligand>
        <name>ATP</name>
        <dbReference type="ChEBI" id="CHEBI:30616"/>
    </ligand>
</feature>
<accession>A5VRH6</accession>